<name>POL_BPNNR</name>
<reference key="1">
    <citation type="journal article" date="2013" name="Extremophiles">
        <title>Genome sequence of a novel deep-sea vent epsilonproteobacterial phage provides new insight into the co-evolution of Epsilonproteobacteria and their phages.</title>
        <authorList>
            <person name="Yoshida-Takashima Y."/>
            <person name="Takaki Y."/>
            <person name="Shimamura S."/>
            <person name="Nunoura T."/>
            <person name="Takai K."/>
        </authorList>
    </citation>
    <scope>NUCLEOTIDE SEQUENCE [GENOMIC DNA]</scope>
</reference>
<reference key="2">
    <citation type="journal article" date="2017" name="Proc. Natl. Acad. Sci. U.S.A.">
        <title>Deep-sea vent phage DNA polymerase specifically initiates DNA synthesis in the absence of primers.</title>
        <authorList>
            <person name="Zhu B."/>
            <person name="Wang L."/>
            <person name="Mitsunobu H."/>
            <person name="Lu X."/>
            <person name="Hernandez A.J."/>
            <person name="Yoshida-Takashima Y."/>
            <person name="Nunoura T."/>
            <person name="Tabor S."/>
            <person name="Richardson C.C."/>
        </authorList>
    </citation>
    <scope>FUNCTION</scope>
    <scope>DOMAIN</scope>
    <scope>CATALYTIC ACTIVITY</scope>
    <scope>COFACTOR</scope>
    <scope>MUTAGENESIS OF ASP-78; ASP-80 AND HIS-115</scope>
    <scope>DNA-BINDING</scope>
    <scope>ACTIVE SITE</scope>
</reference>
<reference evidence="10" key="3">
    <citation type="journal article" date="2019" name="Biochem. Biophys. Res. Commun.">
        <title>Crystal structure and biochemical studies of the bifunctional DNA primase-polymerase from phage NrS-1.</title>
        <authorList>
            <person name="Guo H."/>
            <person name="Li M."/>
            <person name="Wang T."/>
            <person name="Wu H."/>
            <person name="Zhou H."/>
            <person name="Xu C."/>
            <person name="Yu F."/>
            <person name="Liu X."/>
            <person name="He J."/>
        </authorList>
    </citation>
    <scope>X-RAY CRYSTALLOGRAPHY (1.80 ANGSTROMS) OF 1-300</scope>
    <scope>CATALYTIC ACTIVITY</scope>
    <scope>MUTAGENESIS OF GLU-139 AND TYR-261</scope>
</reference>
<reference evidence="11 12" key="4">
    <citation type="journal article" date="2019" name="Biochem. Biophys. Res. Commun.">
        <title>Crystal structures of phage NrS-1 N300-dNTPs-Mg2+ complex provide molecular mechanisms for substrate specificity.</title>
        <authorList>
            <person name="Guo H."/>
            <person name="Li M."/>
            <person name="Wu H."/>
            <person name="Wang W."/>
            <person name="Yu F."/>
            <person name="He J."/>
        </authorList>
    </citation>
    <scope>X-RAY CRYSTALLOGRAPHY (2.34 ANGSTROMS) OF 1-300 IN COMPLEX WITH DEOXYNUCLEOTIDES AND MAGNESIUM</scope>
    <scope>COFACTOR</scope>
</reference>
<reference evidence="13 14 15 16 17" key="5">
    <citation type="journal article" date="2020" name="Nucleic Acids Res.">
        <title>Structural studies reveal a ring-shaped architecture of deep-sea vent phage NrS-1 polymerase.</title>
        <authorList>
            <person name="Chen X."/>
            <person name="Su S."/>
            <person name="Chen Y."/>
            <person name="Gao Y."/>
            <person name="Li Y."/>
            <person name="Shao Z."/>
            <person name="Zhang Y."/>
            <person name="Shao Q."/>
            <person name="Liu H."/>
            <person name="Li J."/>
            <person name="Ma J."/>
            <person name="Gan J."/>
        </authorList>
    </citation>
    <scope>X-RAY CRYSTALLOGRAPHY (2.41 ANGSTROMS) OF 303-718</scope>
    <scope>SUBUNIT</scope>
    <scope>MUTAGENESIS OF LYS-453; LYS-525; ARG-555 AND ARG-556</scope>
    <scope>FUNCTION</scope>
</reference>
<reference evidence="18 19" key="6">
    <citation type="journal article" date="2021" name="Front. Microbiol.">
        <title>Molecular Dissection of the Primase and Polymerase Activities of Deep-Sea Phage NrS-1 Primase-Polymerase.</title>
        <authorList>
            <person name="Huang F."/>
            <person name="Lu X."/>
            <person name="Yu C."/>
            <person name="Sliz P."/>
            <person name="Wang L."/>
            <person name="Zhu B."/>
        </authorList>
    </citation>
    <scope>X-RAY CRYSTALLOGRAPHY (1.86 ANGSTROMS) OF 1-288 IN COMPLEX WITH MAGNESIUM</scope>
    <scope>CATALYTIC ACTIVITY</scope>
    <scope>COFACTOR</scope>
    <scope>MUTAGENESIS OF SER-108; ARG-249; LYS-251 AND TYR-261</scope>
</reference>
<feature type="chain" id="PRO_0000459235" description="DNA Primase-polymerase">
    <location>
        <begin position="1"/>
        <end position="718"/>
    </location>
</feature>
<feature type="region of interest" description="Primase" evidence="4">
    <location>
        <begin position="1"/>
        <end position="292"/>
    </location>
</feature>
<feature type="region of interest" description="Polymerase" evidence="4">
    <location>
        <begin position="1"/>
        <end position="176"/>
    </location>
</feature>
<feature type="region of interest" description="Helicase" evidence="4">
    <location>
        <begin position="404"/>
        <end position="593"/>
    </location>
</feature>
<feature type="active site" description="For polymerase activity" evidence="1">
    <location>
        <position position="78"/>
    </location>
</feature>
<feature type="active site" description="For polymerase activity" evidence="1">
    <location>
        <position position="80"/>
    </location>
</feature>
<feature type="active site" description="For polymerase activity" evidence="1">
    <location>
        <position position="115"/>
    </location>
</feature>
<feature type="active site" description="For polymerase and primase activities" evidence="2">
    <location>
        <position position="139"/>
    </location>
</feature>
<feature type="binding site" evidence="3 5">
    <location>
        <position position="78"/>
    </location>
    <ligand>
        <name>Mg(2+)</name>
        <dbReference type="ChEBI" id="CHEBI:18420"/>
    </ligand>
</feature>
<feature type="binding site" evidence="3 5">
    <location>
        <position position="80"/>
    </location>
    <ligand>
        <name>Mg(2+)</name>
        <dbReference type="ChEBI" id="CHEBI:18420"/>
    </ligand>
</feature>
<feature type="binding site" evidence="9">
    <location>
        <position position="108"/>
    </location>
    <ligand>
        <name>Mg(2+)</name>
        <dbReference type="ChEBI" id="CHEBI:18420"/>
    </ligand>
</feature>
<feature type="binding site" evidence="9">
    <location>
        <position position="115"/>
    </location>
    <ligand>
        <name>Mg(2+)</name>
        <dbReference type="ChEBI" id="CHEBI:18420"/>
    </ligand>
</feature>
<feature type="binding site" evidence="2">
    <location>
        <begin position="304"/>
        <end position="718"/>
    </location>
    <ligand>
        <name>DNA</name>
        <dbReference type="ChEBI" id="CHEBI:16991"/>
    </ligand>
</feature>
<feature type="site" description="Involved in primer extension" evidence="3">
    <location>
        <position position="145"/>
    </location>
</feature>
<feature type="site" description="Involved in sugar discrimination to select deoxynucleotides" evidence="3">
    <location>
        <position position="146"/>
    </location>
</feature>
<feature type="mutagenesis site" description="Complete loss of DNA synthesis activity." evidence="1">
    <original>D</original>
    <variation>A</variation>
    <location>
        <position position="78"/>
    </location>
</feature>
<feature type="mutagenesis site" description="Complete loss of DNA synthesis activity." evidence="1">
    <original>D</original>
    <variation>A</variation>
    <location>
        <position position="80"/>
    </location>
</feature>
<feature type="mutagenesis site" description="Dramatically reduces both primer extension and primase activities." evidence="5">
    <original>S</original>
    <variation>A</variation>
    <variation>H</variation>
    <variation>Y</variation>
    <location>
        <position position="108"/>
    </location>
</feature>
<feature type="mutagenesis site" description="Complete loss of DNA synthesis activity." evidence="1">
    <original>H</original>
    <variation>A</variation>
    <location>
        <position position="115"/>
    </location>
</feature>
<feature type="mutagenesis site" description="Marked decrease in the polymerase activity and complete loss of primase activity." evidence="2">
    <original>E</original>
    <variation>A</variation>
    <location>
        <position position="139"/>
    </location>
</feature>
<feature type="mutagenesis site" description="Much weaker primase activity. No effect on extension activity." evidence="5">
    <original>R</original>
    <variation>D</variation>
    <location>
        <position position="249"/>
    </location>
</feature>
<feature type="mutagenesis site" description="Much weaker primase activity. No effect on extension activity." evidence="5">
    <original>K</original>
    <variation>D</variation>
    <location>
        <position position="251"/>
    </location>
</feature>
<feature type="mutagenesis site" description="Complete loss of primase activity. No effect on DNA polymerase activity." evidence="2">
    <original>Y</original>
    <variation>A</variation>
    <location>
        <position position="261"/>
    </location>
</feature>
<feature type="mutagenesis site" description="Much weaker primase activity. No effect on extension activity." evidence="5">
    <original>Y</original>
    <variation>A</variation>
    <location>
        <position position="261"/>
    </location>
</feature>
<feature type="mutagenesis site" description="Complete loss dCTPase activity." evidence="4">
    <original>K</original>
    <variation>A</variation>
    <location>
        <position position="453"/>
    </location>
</feature>
<feature type="mutagenesis site" description="4x weaker dCTPase activity. Stabilizes the homohexamer form of the protein." evidence="4">
    <original>K</original>
    <variation>A</variation>
    <location>
        <position position="525"/>
    </location>
</feature>
<feature type="mutagenesis site" description="7x weaker dCTPase activity." evidence="4">
    <original>R</original>
    <variation>A</variation>
    <location>
        <position position="555"/>
    </location>
</feature>
<feature type="mutagenesis site" description="15x weaker dCTPase activity." evidence="4">
    <original>R</original>
    <variation>A</variation>
    <location>
        <position position="556"/>
    </location>
</feature>
<feature type="helix" evidence="20">
    <location>
        <begin position="2"/>
        <end position="4"/>
    </location>
</feature>
<feature type="helix" evidence="20">
    <location>
        <begin position="6"/>
        <end position="11"/>
    </location>
</feature>
<feature type="strand" evidence="20">
    <location>
        <begin position="17"/>
        <end position="23"/>
    </location>
</feature>
<feature type="strand" evidence="20">
    <location>
        <begin position="26"/>
        <end position="30"/>
    </location>
</feature>
<feature type="turn" evidence="20">
    <location>
        <begin position="32"/>
        <end position="34"/>
    </location>
</feature>
<feature type="helix" evidence="20">
    <location>
        <begin position="43"/>
        <end position="45"/>
    </location>
</feature>
<feature type="helix" evidence="20">
    <location>
        <begin position="49"/>
        <end position="59"/>
    </location>
</feature>
<feature type="strand" evidence="20">
    <location>
        <begin position="62"/>
        <end position="67"/>
    </location>
</feature>
<feature type="strand" evidence="20">
    <location>
        <begin position="72"/>
        <end position="81"/>
    </location>
</feature>
<feature type="strand" evidence="22">
    <location>
        <begin position="85"/>
        <end position="87"/>
    </location>
</feature>
<feature type="helix" evidence="20">
    <location>
        <begin position="92"/>
        <end position="100"/>
    </location>
</feature>
<feature type="strand" evidence="20">
    <location>
        <begin position="103"/>
        <end position="107"/>
    </location>
</feature>
<feature type="strand" evidence="23">
    <location>
        <begin position="109"/>
        <end position="112"/>
    </location>
</feature>
<feature type="strand" evidence="20">
    <location>
        <begin position="114"/>
        <end position="120"/>
    </location>
</feature>
<feature type="strand" evidence="20">
    <location>
        <begin position="128"/>
        <end position="131"/>
    </location>
</feature>
<feature type="strand" evidence="23">
    <location>
        <begin position="133"/>
        <end position="135"/>
    </location>
</feature>
<feature type="strand" evidence="20">
    <location>
        <begin position="137"/>
        <end position="149"/>
    </location>
</feature>
<feature type="helix" evidence="20">
    <location>
        <begin position="166"/>
        <end position="170"/>
    </location>
</feature>
<feature type="helix" evidence="20">
    <location>
        <begin position="193"/>
        <end position="202"/>
    </location>
</feature>
<feature type="helix" evidence="20">
    <location>
        <begin position="216"/>
        <end position="230"/>
    </location>
</feature>
<feature type="turn" evidence="20">
    <location>
        <begin position="231"/>
        <end position="233"/>
    </location>
</feature>
<feature type="helix" evidence="20">
    <location>
        <begin position="235"/>
        <end position="242"/>
    </location>
</feature>
<feature type="helix" evidence="20">
    <location>
        <begin position="250"/>
        <end position="253"/>
    </location>
</feature>
<feature type="strand" evidence="20">
    <location>
        <begin position="254"/>
        <end position="256"/>
    </location>
</feature>
<feature type="strand" evidence="21">
    <location>
        <begin position="257"/>
        <end position="260"/>
    </location>
</feature>
<feature type="helix" evidence="20">
    <location>
        <begin position="261"/>
        <end position="272"/>
    </location>
</feature>
<feature type="turn" evidence="20">
    <location>
        <begin position="279"/>
        <end position="281"/>
    </location>
</feature>
<feature type="helix" evidence="20">
    <location>
        <begin position="284"/>
        <end position="286"/>
    </location>
</feature>
<feature type="helix" evidence="24">
    <location>
        <begin position="309"/>
        <end position="316"/>
    </location>
</feature>
<feature type="strand" evidence="24">
    <location>
        <begin position="320"/>
        <end position="324"/>
    </location>
</feature>
<feature type="turn" evidence="24">
    <location>
        <begin position="325"/>
        <end position="328"/>
    </location>
</feature>
<feature type="strand" evidence="24">
    <location>
        <begin position="329"/>
        <end position="334"/>
    </location>
</feature>
<feature type="strand" evidence="24">
    <location>
        <begin position="337"/>
        <end position="341"/>
    </location>
</feature>
<feature type="helix" evidence="24">
    <location>
        <begin position="343"/>
        <end position="354"/>
    </location>
</feature>
<feature type="strand" evidence="24">
    <location>
        <begin position="365"/>
        <end position="369"/>
    </location>
</feature>
<feature type="strand" evidence="26">
    <location>
        <begin position="372"/>
        <end position="374"/>
    </location>
</feature>
<feature type="strand" evidence="24">
    <location>
        <begin position="376"/>
        <end position="380"/>
    </location>
</feature>
<feature type="strand" evidence="24">
    <location>
        <begin position="383"/>
        <end position="387"/>
    </location>
</feature>
<feature type="helix" evidence="24">
    <location>
        <begin position="393"/>
        <end position="395"/>
    </location>
</feature>
<feature type="helix" evidence="24">
    <location>
        <begin position="405"/>
        <end position="414"/>
    </location>
</feature>
<feature type="turn" evidence="24">
    <location>
        <begin position="415"/>
        <end position="417"/>
    </location>
</feature>
<feature type="helix" evidence="24">
    <location>
        <begin position="419"/>
        <end position="435"/>
    </location>
</feature>
<feature type="strand" evidence="24">
    <location>
        <begin position="442"/>
        <end position="448"/>
    </location>
</feature>
<feature type="strand" evidence="25">
    <location>
        <begin position="449"/>
        <end position="452"/>
    </location>
</feature>
<feature type="helix" evidence="24">
    <location>
        <begin position="453"/>
        <end position="464"/>
    </location>
</feature>
<feature type="helix" evidence="24">
    <location>
        <begin position="465"/>
        <end position="467"/>
    </location>
</feature>
<feature type="strand" evidence="24">
    <location>
        <begin position="468"/>
        <end position="472"/>
    </location>
</feature>
<feature type="helix" evidence="24">
    <location>
        <begin position="474"/>
        <end position="477"/>
    </location>
</feature>
<feature type="helix" evidence="24">
    <location>
        <begin position="483"/>
        <end position="485"/>
    </location>
</feature>
<feature type="strand" evidence="24">
    <location>
        <begin position="489"/>
        <end position="494"/>
    </location>
</feature>
<feature type="helix" evidence="24">
    <location>
        <begin position="501"/>
        <end position="506"/>
    </location>
</feature>
<feature type="helix" evidence="24">
    <location>
        <begin position="508"/>
        <end position="516"/>
    </location>
</feature>
<feature type="strand" evidence="24">
    <location>
        <begin position="518"/>
        <end position="522"/>
    </location>
</feature>
<feature type="strand" evidence="24">
    <location>
        <begin position="530"/>
        <end position="533"/>
    </location>
</feature>
<feature type="strand" evidence="24">
    <location>
        <begin position="537"/>
        <end position="542"/>
    </location>
</feature>
<feature type="strand" evidence="26">
    <location>
        <begin position="543"/>
        <end position="545"/>
    </location>
</feature>
<feature type="strand" evidence="24">
    <location>
        <begin position="556"/>
        <end position="562"/>
    </location>
</feature>
<feature type="helix" evidence="24">
    <location>
        <begin position="566"/>
        <end position="568"/>
    </location>
</feature>
<feature type="strand" evidence="26">
    <location>
        <begin position="569"/>
        <end position="571"/>
    </location>
</feature>
<feature type="helix" evidence="24">
    <location>
        <begin position="576"/>
        <end position="582"/>
    </location>
</feature>
<feature type="helix" evidence="24">
    <location>
        <begin position="584"/>
        <end position="592"/>
    </location>
</feature>
<feature type="strand" evidence="26">
    <location>
        <begin position="598"/>
        <end position="600"/>
    </location>
</feature>
<feature type="helix" evidence="24">
    <location>
        <begin position="608"/>
        <end position="617"/>
    </location>
</feature>
<feature type="helix" evidence="24">
    <location>
        <begin position="620"/>
        <end position="629"/>
    </location>
</feature>
<feature type="helix" evidence="24">
    <location>
        <begin position="633"/>
        <end position="638"/>
    </location>
</feature>
<feature type="turn" evidence="24">
    <location>
        <begin position="639"/>
        <end position="642"/>
    </location>
</feature>
<feature type="helix" evidence="24">
    <location>
        <begin position="643"/>
        <end position="646"/>
    </location>
</feature>
<feature type="helix" evidence="24">
    <location>
        <begin position="652"/>
        <end position="664"/>
    </location>
</feature>
<feature type="strand" evidence="24">
    <location>
        <begin position="666"/>
        <end position="668"/>
    </location>
</feature>
<feature type="helix" evidence="24">
    <location>
        <begin position="669"/>
        <end position="680"/>
    </location>
</feature>
<feature type="helix" evidence="24">
    <location>
        <begin position="686"/>
        <end position="692"/>
    </location>
</feature>
<feature type="turn" evidence="24">
    <location>
        <begin position="693"/>
        <end position="698"/>
    </location>
</feature>
<feature type="strand" evidence="24">
    <location>
        <begin position="700"/>
        <end position="707"/>
    </location>
</feature>
<feature type="strand" evidence="24">
    <location>
        <begin position="710"/>
        <end position="717"/>
    </location>
</feature>
<sequence>MIMEIPAIKALSRYAQWVIWKKERDTKIPYNPNNGKKASSTDPLAWGDIDEAQAGLVRYGANGLGFVLTKSDPFVFIDLDHVLDENKRVKCEWARQLLKEIKSYTEISPSGDGLHVVVSGKLPDYIKHKTKFDDGSALEVYESGRYMTITGEVFDGRDDIKELDLSILGEFAEHKIETKNAPVQIESATTLDDEAIIDLMKRKGQWPDAPKDGDDWSSLDMSFANRLAFWCGKDIERMDRIFRQSPLMRQKWDRPTAGSTYGRITLKKACDFVDSVYDPALRNESDCPFEPYNEEGGPRNDKEEKDPLWLYKVLLTKGIEVWFDIKLEKYGIKRNNRVDYIAKSSLQQIVFEIIGKTPKNIAVPTYIGAYEPSKPEKWEEEGIKYINLFKPTPLMKVKPVKEMPEIVKNLLLNLFDYDAKSMGLFINWLAFIYQYKERTGVAWIFMGKQGTGKGLLVDLLKKIFEEHMSSNITDANLDSQFNPYLYNKLIVHLNEVSADNRKSRMLVKNRLKTWITDETLYINRKNMKEVEIKNFCNFIINSNETIPVDIEDSDRRFNVIECNNVLKEQEWWTTESYQEILNNAEGFAKYLAGIKVDRSKVNEVVMSEKKKAIVETTESVLKQIAKALTDRDIEWFLDNGLEGVVEKNIVNDFQWEELQEAITTGVIPNKYLMIIVEQILGDSKTITWIKRNIITPYQVGETTVVKMAGKPIRAIVVG</sequence>
<proteinExistence type="evidence at protein level"/>
<accession>M5AAG8</accession>
<comment type="function">
    <text evidence="1 4">Multifunctional protein with primer synthesis, DNA polymerization, and DNA helicase activities (PubMed:28265063, PubMed:32016421). Recognizes a specific sequence motif 5'-TTTGGTTA-3' and initiates DNA synthesis (PubMed:28265063).</text>
</comment>
<comment type="catalytic activity">
    <reaction evidence="1 2">
        <text>DNA(n) + a 2'-deoxyribonucleoside 5'-triphosphate = DNA(n+1) + diphosphate</text>
        <dbReference type="Rhea" id="RHEA:22508"/>
        <dbReference type="Rhea" id="RHEA-COMP:17339"/>
        <dbReference type="Rhea" id="RHEA-COMP:17340"/>
        <dbReference type="ChEBI" id="CHEBI:33019"/>
        <dbReference type="ChEBI" id="CHEBI:61560"/>
        <dbReference type="ChEBI" id="CHEBI:173112"/>
        <dbReference type="EC" id="2.7.7.7"/>
    </reaction>
</comment>
<comment type="catalytic activity">
    <reaction evidence="4">
        <text>ATP + H2O = ADP + phosphate + H(+)</text>
        <dbReference type="Rhea" id="RHEA:13065"/>
        <dbReference type="ChEBI" id="CHEBI:15377"/>
        <dbReference type="ChEBI" id="CHEBI:15378"/>
        <dbReference type="ChEBI" id="CHEBI:30616"/>
        <dbReference type="ChEBI" id="CHEBI:43474"/>
        <dbReference type="ChEBI" id="CHEBI:456216"/>
        <dbReference type="EC" id="3.6.4.12"/>
    </reaction>
</comment>
<comment type="cofactor">
    <cofactor evidence="1 3 5">
        <name>Mg(2+)</name>
        <dbReference type="ChEBI" id="CHEBI:18420"/>
    </cofactor>
</comment>
<comment type="subunit">
    <text evidence="4">homohexamer.</text>
</comment>
<comment type="domain">
    <text evidence="1 4">The N-terminus region is involved in polymerizing DNA and catalyzing de novo DNA synthesis (PubMed:28265063). The helicase region forms a hexameric ring (PubMed:32016421).</text>
</comment>
<gene>
    <name type="primary">28</name>
</gene>
<protein>
    <recommendedName>
        <fullName evidence="6">DNA Primase-polymerase</fullName>
        <shortName evidence="6">Prim-pol</shortName>
        <ecNumber evidence="1 2 5">2.7.7.-</ecNumber>
        <ecNumber evidence="1 2">2.7.7.7</ecNumber>
        <ecNumber evidence="4">3.6.4.12</ecNumber>
    </recommendedName>
    <alternativeName>
        <fullName evidence="8">Gp28</fullName>
    </alternativeName>
    <alternativeName>
        <fullName evidence="7">NrSPol</fullName>
    </alternativeName>
</protein>
<keyword id="KW-0002">3D-structure</keyword>
<keyword id="KW-0067">ATP-binding</keyword>
<keyword id="KW-0235">DNA replication</keyword>
<keyword id="KW-0347">Helicase</keyword>
<keyword id="KW-0378">Hydrolase</keyword>
<keyword id="KW-0511">Multifunctional enzyme</keyword>
<keyword id="KW-0547">Nucleotide-binding</keyword>
<keyword id="KW-1185">Reference proteome</keyword>
<keyword id="KW-0808">Transferase</keyword>
<keyword id="KW-1194">Viral DNA replication</keyword>
<dbReference type="EC" id="2.7.7.-" evidence="1 2 5"/>
<dbReference type="EC" id="2.7.7.7" evidence="1 2"/>
<dbReference type="EC" id="3.6.4.12" evidence="4"/>
<dbReference type="EMBL" id="AB746912">
    <property type="protein sequence ID" value="BAN05337.1"/>
    <property type="molecule type" value="Genomic_DNA"/>
</dbReference>
<dbReference type="PDB" id="6A9W">
    <property type="method" value="X-ray"/>
    <property type="resolution" value="1.80 A"/>
    <property type="chains" value="A=1-300"/>
</dbReference>
<dbReference type="PDB" id="6JON">
    <property type="method" value="X-ray"/>
    <property type="resolution" value="2.34 A"/>
    <property type="chains" value="A=1-300"/>
</dbReference>
<dbReference type="PDB" id="6JOP">
    <property type="method" value="X-ray"/>
    <property type="resolution" value="2.35 A"/>
    <property type="chains" value="A=1-300"/>
</dbReference>
<dbReference type="PDB" id="6JOQ">
    <property type="method" value="X-ray"/>
    <property type="resolution" value="2.40 A"/>
    <property type="chains" value="A=1-300"/>
</dbReference>
<dbReference type="PDB" id="6K9A">
    <property type="method" value="X-ray"/>
    <property type="resolution" value="2.30 A"/>
    <property type="chains" value="A=1-305"/>
</dbReference>
<dbReference type="PDB" id="6K9B">
    <property type="method" value="X-ray"/>
    <property type="resolution" value="2.45 A"/>
    <property type="chains" value="A/B=1-305"/>
</dbReference>
<dbReference type="PDB" id="6K9C">
    <property type="method" value="X-ray"/>
    <property type="resolution" value="2.41 A"/>
    <property type="chains" value="A/B=303-718"/>
</dbReference>
<dbReference type="PDB" id="6K9E">
    <property type="method" value="X-ray"/>
    <property type="resolution" value="2.90 A"/>
    <property type="chains" value="A/B/C/D/E/F=304-718"/>
</dbReference>
<dbReference type="PDB" id="6LRB">
    <property type="method" value="X-ray"/>
    <property type="resolution" value="2.65 A"/>
    <property type="chains" value="A/B/C/D/E/F=303-718"/>
</dbReference>
<dbReference type="PDB" id="7RR3">
    <property type="method" value="X-ray"/>
    <property type="resolution" value="2.24 A"/>
    <property type="chains" value="A=1-289"/>
</dbReference>
<dbReference type="PDB" id="7RR4">
    <property type="method" value="X-ray"/>
    <property type="resolution" value="1.86 A"/>
    <property type="chains" value="A=1-288"/>
</dbReference>
<dbReference type="PDBsum" id="6A9W"/>
<dbReference type="PDBsum" id="6JON"/>
<dbReference type="PDBsum" id="6JOP"/>
<dbReference type="PDBsum" id="6JOQ"/>
<dbReference type="PDBsum" id="6K9A"/>
<dbReference type="PDBsum" id="6K9B"/>
<dbReference type="PDBsum" id="6K9C"/>
<dbReference type="PDBsum" id="6K9E"/>
<dbReference type="PDBsum" id="6LRB"/>
<dbReference type="PDBsum" id="7RR3"/>
<dbReference type="PDBsum" id="7RR4"/>
<dbReference type="SMR" id="M5AAG8"/>
<dbReference type="Proteomes" id="UP000012041">
    <property type="component" value="Genome"/>
</dbReference>
<dbReference type="GO" id="GO:0005524">
    <property type="term" value="F:ATP binding"/>
    <property type="evidence" value="ECO:0007669"/>
    <property type="project" value="UniProtKB-KW"/>
</dbReference>
<dbReference type="GO" id="GO:0004386">
    <property type="term" value="F:helicase activity"/>
    <property type="evidence" value="ECO:0007669"/>
    <property type="project" value="UniProtKB-KW"/>
</dbReference>
<dbReference type="GO" id="GO:0016787">
    <property type="term" value="F:hydrolase activity"/>
    <property type="evidence" value="ECO:0007669"/>
    <property type="project" value="UniProtKB-KW"/>
</dbReference>
<dbReference type="GO" id="GO:0016740">
    <property type="term" value="F:transferase activity"/>
    <property type="evidence" value="ECO:0007669"/>
    <property type="project" value="UniProtKB-KW"/>
</dbReference>
<dbReference type="GO" id="GO:0006260">
    <property type="term" value="P:DNA replication"/>
    <property type="evidence" value="ECO:0007669"/>
    <property type="project" value="UniProtKB-KW"/>
</dbReference>
<dbReference type="GO" id="GO:0039693">
    <property type="term" value="P:viral DNA genome replication"/>
    <property type="evidence" value="ECO:0007669"/>
    <property type="project" value="UniProtKB-KW"/>
</dbReference>
<dbReference type="Gene3D" id="3.40.50.300">
    <property type="entry name" value="P-loop containing nucleotide triphosphate hydrolases"/>
    <property type="match status" value="1"/>
</dbReference>
<dbReference type="InterPro" id="IPR045455">
    <property type="entry name" value="NrS-1_pol-like_helicase"/>
</dbReference>
<dbReference type="InterPro" id="IPR054468">
    <property type="entry name" value="NrSPol-like_HBD"/>
</dbReference>
<dbReference type="InterPro" id="IPR054540">
    <property type="entry name" value="NrSPol-like_head"/>
</dbReference>
<dbReference type="InterPro" id="IPR054541">
    <property type="entry name" value="NrSPol-like_tail"/>
</dbReference>
<dbReference type="InterPro" id="IPR027417">
    <property type="entry name" value="P-loop_NTPase"/>
</dbReference>
<dbReference type="Pfam" id="PF19263">
    <property type="entry name" value="DUF5906"/>
    <property type="match status" value="1"/>
</dbReference>
<dbReference type="Pfam" id="PF22763">
    <property type="entry name" value="NrS1-1_pol-like_HBD"/>
    <property type="match status" value="1"/>
</dbReference>
<dbReference type="Pfam" id="PF22761">
    <property type="entry name" value="NrS1-1_pol-like_head"/>
    <property type="match status" value="1"/>
</dbReference>
<dbReference type="Pfam" id="PF22762">
    <property type="entry name" value="NrS1-pol-like_tail"/>
    <property type="match status" value="1"/>
</dbReference>
<dbReference type="SUPFAM" id="SSF52540">
    <property type="entry name" value="P-loop containing nucleoside triphosphate hydrolases"/>
    <property type="match status" value="1"/>
</dbReference>
<evidence type="ECO:0000269" key="1">
    <source>
    </source>
</evidence>
<evidence type="ECO:0000269" key="2">
    <source>
    </source>
</evidence>
<evidence type="ECO:0000269" key="3">
    <source>
    </source>
</evidence>
<evidence type="ECO:0000269" key="4">
    <source>
    </source>
</evidence>
<evidence type="ECO:0000269" key="5">
    <source>
    </source>
</evidence>
<evidence type="ECO:0000303" key="6">
    <source>
    </source>
</evidence>
<evidence type="ECO:0000303" key="7">
    <source>
    </source>
</evidence>
<evidence type="ECO:0000305" key="8"/>
<evidence type="ECO:0000305" key="9">
    <source>
    </source>
</evidence>
<evidence type="ECO:0007744" key="10">
    <source>
        <dbReference type="PDB" id="6A9W"/>
    </source>
</evidence>
<evidence type="ECO:0007744" key="11">
    <source>
        <dbReference type="PDB" id="6JON"/>
    </source>
</evidence>
<evidence type="ECO:0007744" key="12">
    <source>
        <dbReference type="PDB" id="6JOP"/>
    </source>
</evidence>
<evidence type="ECO:0007744" key="13">
    <source>
        <dbReference type="PDB" id="6K9A"/>
    </source>
</evidence>
<evidence type="ECO:0007744" key="14">
    <source>
        <dbReference type="PDB" id="6K9B"/>
    </source>
</evidence>
<evidence type="ECO:0007744" key="15">
    <source>
        <dbReference type="PDB" id="6K9C"/>
    </source>
</evidence>
<evidence type="ECO:0007744" key="16">
    <source>
        <dbReference type="PDB" id="6K9E"/>
    </source>
</evidence>
<evidence type="ECO:0007744" key="17">
    <source>
        <dbReference type="PDB" id="6LRB"/>
    </source>
</evidence>
<evidence type="ECO:0007744" key="18">
    <source>
        <dbReference type="PDB" id="7RR3"/>
    </source>
</evidence>
<evidence type="ECO:0007744" key="19">
    <source>
        <dbReference type="PDB" id="7RR4"/>
    </source>
</evidence>
<evidence type="ECO:0007829" key="20">
    <source>
        <dbReference type="PDB" id="6A9W"/>
    </source>
</evidence>
<evidence type="ECO:0007829" key="21">
    <source>
        <dbReference type="PDB" id="6JON"/>
    </source>
</evidence>
<evidence type="ECO:0007829" key="22">
    <source>
        <dbReference type="PDB" id="6JOQ"/>
    </source>
</evidence>
<evidence type="ECO:0007829" key="23">
    <source>
        <dbReference type="PDB" id="6K9B"/>
    </source>
</evidence>
<evidence type="ECO:0007829" key="24">
    <source>
        <dbReference type="PDB" id="6K9C"/>
    </source>
</evidence>
<evidence type="ECO:0007829" key="25">
    <source>
        <dbReference type="PDB" id="6K9E"/>
    </source>
</evidence>
<evidence type="ECO:0007829" key="26">
    <source>
        <dbReference type="PDB" id="6LRB"/>
    </source>
</evidence>
<organism>
    <name type="scientific">Nitratiruptor phage NrS-1</name>
    <dbReference type="NCBI Taxonomy" id="1230469"/>
    <lineage>
        <taxon>Viruses</taxon>
        <taxon>Duplodnaviria</taxon>
        <taxon>Heunggongvirae</taxon>
        <taxon>Uroviricota</taxon>
        <taxon>Caudoviricetes</taxon>
    </lineage>
</organism>